<feature type="chain" id="PRO_1000002708" description="Crossover junction endodeoxyribonuclease RuvC">
    <location>
        <begin position="1"/>
        <end position="186"/>
    </location>
</feature>
<feature type="active site" evidence="1">
    <location>
        <position position="7"/>
    </location>
</feature>
<feature type="active site" evidence="1">
    <location>
        <position position="73"/>
    </location>
</feature>
<feature type="active site" evidence="1">
    <location>
        <position position="145"/>
    </location>
</feature>
<feature type="binding site" evidence="1">
    <location>
        <position position="7"/>
    </location>
    <ligand>
        <name>Mg(2+)</name>
        <dbReference type="ChEBI" id="CHEBI:18420"/>
        <label>1</label>
    </ligand>
</feature>
<feature type="binding site" evidence="1">
    <location>
        <position position="73"/>
    </location>
    <ligand>
        <name>Mg(2+)</name>
        <dbReference type="ChEBI" id="CHEBI:18420"/>
        <label>2</label>
    </ligand>
</feature>
<feature type="binding site" evidence="1">
    <location>
        <position position="145"/>
    </location>
    <ligand>
        <name>Mg(2+)</name>
        <dbReference type="ChEBI" id="CHEBI:18420"/>
        <label>1</label>
    </ligand>
</feature>
<name>RUVC_ACISJ</name>
<accession>A1WBZ4</accession>
<evidence type="ECO:0000255" key="1">
    <source>
        <dbReference type="HAMAP-Rule" id="MF_00034"/>
    </source>
</evidence>
<comment type="function">
    <text evidence="1">The RuvA-RuvB-RuvC complex processes Holliday junction (HJ) DNA during genetic recombination and DNA repair. Endonuclease that resolves HJ intermediates. Cleaves cruciform DNA by making single-stranded nicks across the HJ at symmetrical positions within the homologous arms, yielding a 5'-phosphate and a 3'-hydroxyl group; requires a central core of homology in the junction. The consensus cleavage sequence is 5'-(A/T)TT(C/G)-3'. Cleavage occurs on the 3'-side of the TT dinucleotide at the point of strand exchange. HJ branch migration catalyzed by RuvA-RuvB allows RuvC to scan DNA until it finds its consensus sequence, where it cleaves and resolves the cruciform DNA.</text>
</comment>
<comment type="catalytic activity">
    <reaction evidence="1">
        <text>Endonucleolytic cleavage at a junction such as a reciprocal single-stranded crossover between two homologous DNA duplexes (Holliday junction).</text>
        <dbReference type="EC" id="3.1.21.10"/>
    </reaction>
</comment>
<comment type="cofactor">
    <cofactor evidence="1">
        <name>Mg(2+)</name>
        <dbReference type="ChEBI" id="CHEBI:18420"/>
    </cofactor>
    <text evidence="1">Binds 2 Mg(2+) ion per subunit.</text>
</comment>
<comment type="subunit">
    <text evidence="1">Homodimer which binds Holliday junction (HJ) DNA. The HJ becomes 2-fold symmetrical on binding to RuvC with unstacked arms; it has a different conformation from HJ DNA in complex with RuvA. In the full resolvosome a probable DNA-RuvA(4)-RuvB(12)-RuvC(2) complex forms which resolves the HJ.</text>
</comment>
<comment type="subcellular location">
    <subcellularLocation>
        <location evidence="1">Cytoplasm</location>
    </subcellularLocation>
</comment>
<comment type="similarity">
    <text evidence="1">Belongs to the RuvC family.</text>
</comment>
<reference key="1">
    <citation type="submission" date="2006-12" db="EMBL/GenBank/DDBJ databases">
        <title>Complete sequence of chromosome 1 of Acidovorax sp. JS42.</title>
        <authorList>
            <person name="Copeland A."/>
            <person name="Lucas S."/>
            <person name="Lapidus A."/>
            <person name="Barry K."/>
            <person name="Detter J.C."/>
            <person name="Glavina del Rio T."/>
            <person name="Dalin E."/>
            <person name="Tice H."/>
            <person name="Pitluck S."/>
            <person name="Chertkov O."/>
            <person name="Brettin T."/>
            <person name="Bruce D."/>
            <person name="Han C."/>
            <person name="Tapia R."/>
            <person name="Gilna P."/>
            <person name="Schmutz J."/>
            <person name="Larimer F."/>
            <person name="Land M."/>
            <person name="Hauser L."/>
            <person name="Kyrpides N."/>
            <person name="Kim E."/>
            <person name="Stahl D."/>
            <person name="Richardson P."/>
        </authorList>
    </citation>
    <scope>NUCLEOTIDE SEQUENCE [LARGE SCALE GENOMIC DNA]</scope>
    <source>
        <strain>JS42</strain>
    </source>
</reference>
<proteinExistence type="inferred from homology"/>
<dbReference type="EC" id="3.1.21.10" evidence="1"/>
<dbReference type="EMBL" id="CP000539">
    <property type="protein sequence ID" value="ABM43769.1"/>
    <property type="molecule type" value="Genomic_DNA"/>
</dbReference>
<dbReference type="SMR" id="A1WBZ4"/>
<dbReference type="STRING" id="232721.Ajs_3658"/>
<dbReference type="KEGG" id="ajs:Ajs_3658"/>
<dbReference type="eggNOG" id="COG0817">
    <property type="taxonomic scope" value="Bacteria"/>
</dbReference>
<dbReference type="HOGENOM" id="CLU_091257_2_1_4"/>
<dbReference type="Proteomes" id="UP000000645">
    <property type="component" value="Chromosome"/>
</dbReference>
<dbReference type="GO" id="GO:0005737">
    <property type="term" value="C:cytoplasm"/>
    <property type="evidence" value="ECO:0007669"/>
    <property type="project" value="UniProtKB-SubCell"/>
</dbReference>
<dbReference type="GO" id="GO:0048476">
    <property type="term" value="C:Holliday junction resolvase complex"/>
    <property type="evidence" value="ECO:0007669"/>
    <property type="project" value="UniProtKB-UniRule"/>
</dbReference>
<dbReference type="GO" id="GO:0008821">
    <property type="term" value="F:crossover junction DNA endonuclease activity"/>
    <property type="evidence" value="ECO:0007669"/>
    <property type="project" value="UniProtKB-UniRule"/>
</dbReference>
<dbReference type="GO" id="GO:0003677">
    <property type="term" value="F:DNA binding"/>
    <property type="evidence" value="ECO:0007669"/>
    <property type="project" value="UniProtKB-KW"/>
</dbReference>
<dbReference type="GO" id="GO:0000287">
    <property type="term" value="F:magnesium ion binding"/>
    <property type="evidence" value="ECO:0007669"/>
    <property type="project" value="UniProtKB-UniRule"/>
</dbReference>
<dbReference type="GO" id="GO:0006310">
    <property type="term" value="P:DNA recombination"/>
    <property type="evidence" value="ECO:0007669"/>
    <property type="project" value="UniProtKB-UniRule"/>
</dbReference>
<dbReference type="GO" id="GO:0006281">
    <property type="term" value="P:DNA repair"/>
    <property type="evidence" value="ECO:0007669"/>
    <property type="project" value="UniProtKB-UniRule"/>
</dbReference>
<dbReference type="CDD" id="cd16962">
    <property type="entry name" value="RuvC"/>
    <property type="match status" value="1"/>
</dbReference>
<dbReference type="FunFam" id="3.30.420.10:FF:000002">
    <property type="entry name" value="Crossover junction endodeoxyribonuclease RuvC"/>
    <property type="match status" value="1"/>
</dbReference>
<dbReference type="Gene3D" id="3.30.420.10">
    <property type="entry name" value="Ribonuclease H-like superfamily/Ribonuclease H"/>
    <property type="match status" value="1"/>
</dbReference>
<dbReference type="HAMAP" id="MF_00034">
    <property type="entry name" value="RuvC"/>
    <property type="match status" value="1"/>
</dbReference>
<dbReference type="InterPro" id="IPR012337">
    <property type="entry name" value="RNaseH-like_sf"/>
</dbReference>
<dbReference type="InterPro" id="IPR036397">
    <property type="entry name" value="RNaseH_sf"/>
</dbReference>
<dbReference type="InterPro" id="IPR020563">
    <property type="entry name" value="X-over_junc_endoDNase_Mg_BS"/>
</dbReference>
<dbReference type="InterPro" id="IPR002176">
    <property type="entry name" value="X-over_junc_endoDNase_RuvC"/>
</dbReference>
<dbReference type="NCBIfam" id="TIGR00228">
    <property type="entry name" value="ruvC"/>
    <property type="match status" value="1"/>
</dbReference>
<dbReference type="PANTHER" id="PTHR30194">
    <property type="entry name" value="CROSSOVER JUNCTION ENDODEOXYRIBONUCLEASE RUVC"/>
    <property type="match status" value="1"/>
</dbReference>
<dbReference type="PANTHER" id="PTHR30194:SF3">
    <property type="entry name" value="CROSSOVER JUNCTION ENDODEOXYRIBONUCLEASE RUVC"/>
    <property type="match status" value="1"/>
</dbReference>
<dbReference type="Pfam" id="PF02075">
    <property type="entry name" value="RuvC"/>
    <property type="match status" value="1"/>
</dbReference>
<dbReference type="PRINTS" id="PR00696">
    <property type="entry name" value="RSOLVASERUVC"/>
</dbReference>
<dbReference type="SUPFAM" id="SSF53098">
    <property type="entry name" value="Ribonuclease H-like"/>
    <property type="match status" value="1"/>
</dbReference>
<dbReference type="PROSITE" id="PS01321">
    <property type="entry name" value="RUVC"/>
    <property type="match status" value="1"/>
</dbReference>
<sequence length="186" mass="19506">MRILGIDPGLQTTGFGVVDVDGHRLRYVASGTVRTTGRATGLALGDLPGRLKVLFDGVSEVAARYQPSTAAVEIIFVNVNPQSTLLLGQARGAALTALVNANLPVAEYTALQMKKAVVGHGRAAKSQVQEMVRRLLELPGLPGTDAADALGLAITHAHAGAAMARVGEVAQLTRRQHAMYKAGRSY</sequence>
<organism>
    <name type="scientific">Acidovorax sp. (strain JS42)</name>
    <dbReference type="NCBI Taxonomy" id="232721"/>
    <lineage>
        <taxon>Bacteria</taxon>
        <taxon>Pseudomonadati</taxon>
        <taxon>Pseudomonadota</taxon>
        <taxon>Betaproteobacteria</taxon>
        <taxon>Burkholderiales</taxon>
        <taxon>Comamonadaceae</taxon>
        <taxon>Acidovorax</taxon>
    </lineage>
</organism>
<protein>
    <recommendedName>
        <fullName evidence="1">Crossover junction endodeoxyribonuclease RuvC</fullName>
        <ecNumber evidence="1">3.1.21.10</ecNumber>
    </recommendedName>
    <alternativeName>
        <fullName evidence="1">Holliday junction nuclease RuvC</fullName>
    </alternativeName>
    <alternativeName>
        <fullName evidence="1">Holliday junction resolvase RuvC</fullName>
    </alternativeName>
</protein>
<gene>
    <name evidence="1" type="primary">ruvC</name>
    <name type="ordered locus">Ajs_3658</name>
</gene>
<keyword id="KW-0963">Cytoplasm</keyword>
<keyword id="KW-0227">DNA damage</keyword>
<keyword id="KW-0233">DNA recombination</keyword>
<keyword id="KW-0234">DNA repair</keyword>
<keyword id="KW-0238">DNA-binding</keyword>
<keyword id="KW-0255">Endonuclease</keyword>
<keyword id="KW-0378">Hydrolase</keyword>
<keyword id="KW-0460">Magnesium</keyword>
<keyword id="KW-0479">Metal-binding</keyword>
<keyword id="KW-0540">Nuclease</keyword>